<sequence>MKNTPEVKASPQTGYRIPGYLLVVYALLLFTLGWFGHQRWADISPIPLSTSAAAIAAPPTKVGMVPASTAVTADENHPGSLHAAAENSATQTAASGSQTSASSQEATPDTKPAKLVTGWQTAKPGELPYIAFSAHVYTSAPDKRSVTLNGERYREGDSPYQGLVIEQIEQDMVIFSFNGEPFILDSLQDWPGGKPGDDAAQGNEQEPTSKPEQTVRTTKK</sequence>
<name>GSPB_DICD3</name>
<organism>
    <name type="scientific">Dickeya dadantii (strain 3937)</name>
    <name type="common">Erwinia chrysanthemi (strain 3937)</name>
    <dbReference type="NCBI Taxonomy" id="198628"/>
    <lineage>
        <taxon>Bacteria</taxon>
        <taxon>Pseudomonadati</taxon>
        <taxon>Pseudomonadota</taxon>
        <taxon>Gammaproteobacteria</taxon>
        <taxon>Enterobacterales</taxon>
        <taxon>Pectobacteriaceae</taxon>
        <taxon>Dickeya</taxon>
    </lineage>
</organism>
<keyword id="KW-0002">3D-structure</keyword>
<keyword id="KW-0997">Cell inner membrane</keyword>
<keyword id="KW-1003">Cell membrane</keyword>
<keyword id="KW-0472">Membrane</keyword>
<keyword id="KW-1185">Reference proteome</keyword>
<keyword id="KW-0812">Transmembrane</keyword>
<keyword id="KW-1133">Transmembrane helix</keyword>
<keyword id="KW-0813">Transport</keyword>
<gene>
    <name type="primary">outB</name>
    <name type="ordered locus">Dda3937_02412</name>
</gene>
<evidence type="ECO:0000255" key="1"/>
<evidence type="ECO:0000256" key="2">
    <source>
        <dbReference type="SAM" id="MobiDB-lite"/>
    </source>
</evidence>
<evidence type="ECO:0000305" key="3"/>
<evidence type="ECO:0007829" key="4">
    <source>
        <dbReference type="PDB" id="4WFW"/>
    </source>
</evidence>
<reference key="1">
    <citation type="journal article" date="1992" name="Mol. Microbiol.">
        <title>Some of the out genes involved in the secretion of pectate lyases in Erwinia chrysanthemi are regulated by kdgR.</title>
        <authorList>
            <person name="Condemine G."/>
            <person name="Dorel C."/>
            <person name="Hugouvieux-Cotte-Pattat N."/>
            <person name="Robert-Baudouy J."/>
        </authorList>
    </citation>
    <scope>NUCLEOTIDE SEQUENCE [GENOMIC DNA]</scope>
    <source>
        <strain>3937</strain>
    </source>
</reference>
<reference key="2">
    <citation type="submission" date="1998-05" db="EMBL/GenBank/DDBJ databases">
        <authorList>
            <person name="Condemine G."/>
        </authorList>
    </citation>
    <scope>SEQUENCE REVISION</scope>
</reference>
<reference key="3">
    <citation type="journal article" date="2011" name="J. Bacteriol.">
        <title>Genome sequence of the plant-pathogenic bacterium Dickeya dadantii 3937.</title>
        <authorList>
            <person name="Glasner J.D."/>
            <person name="Yang C.H."/>
            <person name="Reverchon S."/>
            <person name="Hugouvieux-Cotte-Pattat N."/>
            <person name="Condemine G."/>
            <person name="Bohin J.P."/>
            <person name="Van Gijsegem F."/>
            <person name="Yang S."/>
            <person name="Franza T."/>
            <person name="Expert D."/>
            <person name="Plunkett G. III"/>
            <person name="San Francisco M.J."/>
            <person name="Charkowski A.O."/>
            <person name="Py B."/>
            <person name="Bell K."/>
            <person name="Rauscher L."/>
            <person name="Rodriguez-Palenzuela P."/>
            <person name="Toussaint A."/>
            <person name="Holeva M.C."/>
            <person name="He S.Y."/>
            <person name="Douet V."/>
            <person name="Boccara M."/>
            <person name="Blanco C."/>
            <person name="Toth I."/>
            <person name="Anderson B.D."/>
            <person name="Biehl B.S."/>
            <person name="Mau B."/>
            <person name="Flynn S.M."/>
            <person name="Barras F."/>
            <person name="Lindeberg M."/>
            <person name="Birch P.R."/>
            <person name="Tsuyumu S."/>
            <person name="Shi X."/>
            <person name="Hibbing M."/>
            <person name="Yap M.N."/>
            <person name="Carpentier M."/>
            <person name="Dassa E."/>
            <person name="Umehara M."/>
            <person name="Kim J.F."/>
            <person name="Rusch M."/>
            <person name="Soni P."/>
            <person name="Mayhew G.F."/>
            <person name="Fouts D.E."/>
            <person name="Gill S.R."/>
            <person name="Blattner F.R."/>
            <person name="Keen N.T."/>
            <person name="Perna N.T."/>
        </authorList>
    </citation>
    <scope>NUCLEOTIDE SEQUENCE [LARGE SCALE GENOMIC DNA]</scope>
    <source>
        <strain>3937</strain>
    </source>
</reference>
<protein>
    <recommendedName>
        <fullName>General secretion pathway protein B</fullName>
    </recommendedName>
</protein>
<proteinExistence type="evidence at protein level"/>
<feature type="chain" id="PRO_0000214996" description="General secretion pathway protein B">
    <location>
        <begin position="1"/>
        <end position="220"/>
    </location>
</feature>
<feature type="transmembrane region" description="Helical" evidence="1">
    <location>
        <begin position="17"/>
        <end position="37"/>
    </location>
</feature>
<feature type="region of interest" description="Disordered" evidence="2">
    <location>
        <begin position="85"/>
        <end position="114"/>
    </location>
</feature>
<feature type="region of interest" description="Disordered" evidence="2">
    <location>
        <begin position="188"/>
        <end position="220"/>
    </location>
</feature>
<feature type="compositionally biased region" description="Low complexity" evidence="2">
    <location>
        <begin position="85"/>
        <end position="107"/>
    </location>
</feature>
<feature type="compositionally biased region" description="Polar residues" evidence="2">
    <location>
        <begin position="202"/>
        <end position="220"/>
    </location>
</feature>
<feature type="strand" evidence="4">
    <location>
        <begin position="132"/>
        <end position="136"/>
    </location>
</feature>
<feature type="helix" evidence="4">
    <location>
        <begin position="141"/>
        <end position="143"/>
    </location>
</feature>
<feature type="strand" evidence="4">
    <location>
        <begin position="145"/>
        <end position="148"/>
    </location>
</feature>
<feature type="strand" evidence="4">
    <location>
        <begin position="151"/>
        <end position="153"/>
    </location>
</feature>
<feature type="strand" evidence="4">
    <location>
        <begin position="163"/>
        <end position="168"/>
    </location>
</feature>
<feature type="strand" evidence="4">
    <location>
        <begin position="170"/>
        <end position="177"/>
    </location>
</feature>
<feature type="strand" evidence="4">
    <location>
        <begin position="180"/>
        <end position="185"/>
    </location>
</feature>
<accession>Q01563</accession>
<accession>E0SM44</accession>
<dbReference type="EMBL" id="X65265">
    <property type="protein sequence ID" value="CAA46373.1"/>
    <property type="molecule type" value="Genomic_DNA"/>
</dbReference>
<dbReference type="EMBL" id="CP002038">
    <property type="protein sequence ID" value="ADM99379.1"/>
    <property type="molecule type" value="Genomic_DNA"/>
</dbReference>
<dbReference type="RefSeq" id="WP_013318813.1">
    <property type="nucleotide sequence ID" value="NC_014500.1"/>
</dbReference>
<dbReference type="PDB" id="4WFW">
    <property type="method" value="X-ray"/>
    <property type="resolution" value="2.05 A"/>
    <property type="chains" value="A=112-201"/>
</dbReference>
<dbReference type="PDBsum" id="4WFW"/>
<dbReference type="SMR" id="Q01563"/>
<dbReference type="STRING" id="198628.Dda3937_02412"/>
<dbReference type="KEGG" id="ddd:Dda3937_02412"/>
<dbReference type="PATRIC" id="fig|198628.6.peg.3140"/>
<dbReference type="eggNOG" id="COG3266">
    <property type="taxonomic scope" value="Bacteria"/>
</dbReference>
<dbReference type="HOGENOM" id="CLU_1426772_0_0_6"/>
<dbReference type="OrthoDB" id="5432325at2"/>
<dbReference type="EvolutionaryTrace" id="Q01563"/>
<dbReference type="PHI-base" id="PHI:123184"/>
<dbReference type="Proteomes" id="UP000006859">
    <property type="component" value="Chromosome"/>
</dbReference>
<dbReference type="GO" id="GO:0005886">
    <property type="term" value="C:plasma membrane"/>
    <property type="evidence" value="ECO:0007669"/>
    <property type="project" value="UniProtKB-SubCell"/>
</dbReference>
<dbReference type="GO" id="GO:0015627">
    <property type="term" value="C:type II protein secretion system complex"/>
    <property type="evidence" value="ECO:0007669"/>
    <property type="project" value="InterPro"/>
</dbReference>
<dbReference type="GO" id="GO:0016485">
    <property type="term" value="P:protein processing"/>
    <property type="evidence" value="ECO:0000315"/>
    <property type="project" value="ASAP"/>
</dbReference>
<dbReference type="InterPro" id="IPR032389">
    <property type="entry name" value="GspB_C"/>
</dbReference>
<dbReference type="NCBIfam" id="NF037978">
    <property type="entry name" value="T2SS_GspB"/>
    <property type="match status" value="1"/>
</dbReference>
<dbReference type="Pfam" id="PF16537">
    <property type="entry name" value="T2SSB"/>
    <property type="match status" value="1"/>
</dbReference>
<comment type="function">
    <text>Out proteins are required for the translocation of pectate lyases and cellulases across the outer membrane.</text>
</comment>
<comment type="subcellular location">
    <subcellularLocation>
        <location evidence="3">Cell inner membrane</location>
        <topology evidence="3">Single-pass membrane protein</topology>
    </subcellularLocation>
</comment>
<comment type="similarity">
    <text evidence="3">Belongs to the ExeB/OutB/PulB family.</text>
</comment>